<accession>Q07831</accession>
<feature type="signal peptide" evidence="3">
    <location>
        <begin position="1"/>
        <end position="20"/>
    </location>
</feature>
<feature type="chain" id="PRO_0000031671" description="Non-pathogenic pore-forming peptide amoebapore A">
    <location>
        <begin position="21"/>
        <end position="97"/>
    </location>
</feature>
<feature type="domain" description="Saposin B-type" evidence="2">
    <location>
        <begin position="21"/>
        <end position="97"/>
    </location>
</feature>
<feature type="site" description="Essential for homodimerization" evidence="1">
    <location>
        <position position="95"/>
    </location>
</feature>
<feature type="disulfide bond" evidence="2">
    <location>
        <begin position="25"/>
        <end position="97"/>
    </location>
</feature>
<feature type="disulfide bond" evidence="2">
    <location>
        <begin position="28"/>
        <end position="91"/>
    </location>
</feature>
<feature type="disulfide bond" evidence="2">
    <location>
        <begin position="55"/>
        <end position="66"/>
    </location>
</feature>
<protein>
    <recommendedName>
        <fullName>Non-pathogenic pore-forming peptide amoebapore A</fullName>
        <shortName evidence="4">APNP</shortName>
    </recommendedName>
</protein>
<proteinExistence type="evidence at protein level"/>
<sequence length="97" mass="10432">MKAIVFVLIFAVAFAVTLRQGPIVCNLCTGLINTLENLLTTKGADKVKDYIDSLCNKASGFIATLCTKVLDFGVDKLIQLIEDKVDANAICAKIHAC</sequence>
<keyword id="KW-0903">Direct protein sequencing</keyword>
<keyword id="KW-1015">Disulfide bond</keyword>
<keyword id="KW-0732">Signal</keyword>
<organism>
    <name type="scientific">Entamoeba histolytica</name>
    <dbReference type="NCBI Taxonomy" id="5759"/>
    <lineage>
        <taxon>Eukaryota</taxon>
        <taxon>Amoebozoa</taxon>
        <taxon>Evosea</taxon>
        <taxon>Archamoebae</taxon>
        <taxon>Mastigamoebida</taxon>
        <taxon>Entamoebidae</taxon>
        <taxon>Entamoeba</taxon>
    </lineage>
</organism>
<evidence type="ECO:0000250" key="1">
    <source>
        <dbReference type="UniProtKB" id="P34095"/>
    </source>
</evidence>
<evidence type="ECO:0000255" key="2">
    <source>
        <dbReference type="PROSITE-ProRule" id="PRU00415"/>
    </source>
</evidence>
<evidence type="ECO:0000269" key="3">
    <source>
    </source>
</evidence>
<evidence type="ECO:0000303" key="4">
    <source>
    </source>
</evidence>
<name>PFPAN_ENTHI</name>
<comment type="function">
    <text evidence="3">Forms pores in the cell membrane of host cells (PubMed:8515772). Implicated in the cytolytic activity of the parasite (PubMed:8515772). Pore forming activity is lower compared to the activity of ameobapore A from the pathogenic strain HM-1:IMSS (PubMed:8515772).</text>
</comment>
<comment type="subunit">
    <text evidence="1">Monomer (By similarity). Homodimer (By similarity). Hexamer; formed during insertion in the membrane (By similarity).</text>
</comment>
<comment type="subcellular location">
    <subcellularLocation>
        <location evidence="1">Cytoplasmic granule</location>
    </subcellularLocation>
</comment>
<comment type="developmental stage">
    <text evidence="3">Expressed in trophozoites (at protein level).</text>
</comment>
<comment type="polymorphism">
    <text evidence="3">Sequence variation may contribute to strain virulence (PubMed:8515772). Ameobapore A pore forming activity is higher in pathogenic strains such as HM-1:IMSS (PubMed:8515772).</text>
</comment>
<dbReference type="EMBL" id="L04984">
    <property type="protein sequence ID" value="AAA18632.1"/>
    <property type="molecule type" value="Unassigned_DNA"/>
</dbReference>
<dbReference type="SMR" id="Q07831"/>
<dbReference type="TCDB" id="1.C.35.1.4">
    <property type="family name" value="the amoebapore (amoebapore) family"/>
</dbReference>
<dbReference type="VEuPathDB" id="AmoebaDB:EHI5A_171330"/>
<dbReference type="VEuPathDB" id="AmoebaDB:EHI7A_127390"/>
<dbReference type="VEuPathDB" id="AmoebaDB:EHI8A_138030"/>
<dbReference type="VEuPathDB" id="AmoebaDB:EHI_159480"/>
<dbReference type="VEuPathDB" id="AmoebaDB:KM1_215020"/>
<dbReference type="Gene3D" id="1.10.225.10">
    <property type="entry name" value="Saposin-like"/>
    <property type="match status" value="1"/>
</dbReference>
<dbReference type="InterPro" id="IPR008138">
    <property type="entry name" value="SapB_2"/>
</dbReference>
<dbReference type="InterPro" id="IPR011001">
    <property type="entry name" value="Saposin-like"/>
</dbReference>
<dbReference type="InterPro" id="IPR008139">
    <property type="entry name" value="SaposinB_dom"/>
</dbReference>
<dbReference type="Pfam" id="PF03489">
    <property type="entry name" value="SapB_2"/>
    <property type="match status" value="1"/>
</dbReference>
<dbReference type="SMART" id="SM00741">
    <property type="entry name" value="SapB"/>
    <property type="match status" value="1"/>
</dbReference>
<dbReference type="SUPFAM" id="SSF47862">
    <property type="entry name" value="Saposin"/>
    <property type="match status" value="1"/>
</dbReference>
<dbReference type="PROSITE" id="PS50015">
    <property type="entry name" value="SAP_B"/>
    <property type="match status" value="1"/>
</dbReference>
<reference key="1">
    <citation type="journal article" date="1993" name="Mol. Biochem. Parasitol.">
        <title>Comparison of pore-forming peptides from pathogenic and nonpathogenic Entamoeba histolytica.</title>
        <authorList>
            <person name="Leippe M."/>
            <person name="Bahr E."/>
            <person name="Tannich E."/>
            <person name="Horstmann R.D."/>
        </authorList>
    </citation>
    <scope>NUCLEOTIDE SEQUENCE</scope>
    <scope>PROTEIN SEQUENCE OF 21-34</scope>
    <scope>FUNCTION</scope>
    <scope>DEVELOPMENTAL STAGE</scope>
    <scope>POLYMORPHISM</scope>
    <source>
        <strain>SAW 142</strain>
    </source>
</reference>